<feature type="initiator methionine" description="Removed" evidence="1">
    <location>
        <position position="1"/>
    </location>
</feature>
<feature type="chain" id="PRO_0000440968" description="Ribosome biogenesis protein NOP53">
    <location>
        <begin position="2"/>
        <end position="484"/>
    </location>
</feature>
<feature type="region of interest" description="Disordered" evidence="2">
    <location>
        <begin position="1"/>
        <end position="51"/>
    </location>
</feature>
<feature type="region of interest" description="Mediates interaction with CDKN2A/isoform tumor suppressor ARF" evidence="1">
    <location>
        <begin position="148"/>
        <end position="437"/>
    </location>
</feature>
<feature type="region of interest" description="Disordered" evidence="2">
    <location>
        <begin position="304"/>
        <end position="356"/>
    </location>
</feature>
<feature type="region of interest" description="Mediates interaction with human herpesvirus 8 protein ORF16" evidence="1">
    <location>
        <begin position="348"/>
        <end position="392"/>
    </location>
</feature>
<feature type="region of interest" description="Nucleolar localization signal" evidence="1">
    <location>
        <begin position="353"/>
        <end position="401"/>
    </location>
</feature>
<feature type="region of interest" description="Nucleolar localization signal" evidence="1">
    <location>
        <begin position="402"/>
        <end position="484"/>
    </location>
</feature>
<feature type="compositionally biased region" description="Basic residues" evidence="2">
    <location>
        <begin position="35"/>
        <end position="49"/>
    </location>
</feature>
<feature type="compositionally biased region" description="Basic and acidic residues" evidence="2">
    <location>
        <begin position="336"/>
        <end position="348"/>
    </location>
</feature>
<feature type="modified residue" description="N-acetylalanine" evidence="1">
    <location>
        <position position="2"/>
    </location>
</feature>
<feature type="modified residue" description="Phosphoserine" evidence="1">
    <location>
        <position position="29"/>
    </location>
</feature>
<feature type="modified residue" description="Phosphoserine" evidence="8 9">
    <location>
        <position position="305"/>
    </location>
</feature>
<feature type="sequence conflict" description="In Ref. 5; AAH17637." evidence="5" ref="5">
    <original>G</original>
    <variation>A</variation>
    <location>
        <position position="317"/>
    </location>
</feature>
<feature type="sequence conflict" description="In Ref. 5; AAH17637." evidence="5" ref="5">
    <original>A</original>
    <variation>V</variation>
    <location>
        <position position="385"/>
    </location>
</feature>
<sequence>MAAGGNRDGEKRGSRSQADSGFLGLRPTSVDPALRRRRRGPRNKKRGWRRLAEEPLGLEVDQFLEDVRLQERTTGGLLAEAPNEKLFFVDTGFKRKEPRKKRTLVQKKSQRLQKPLRVDLALENHSKIPAPKDILAHQVPNAKKLRRKEELWEKLAKQGELPRDVRKAQARLLSPPTPKAKPGPQDIIERPFYDLWNPDNPLDTPLIGQDAFFLEQTKKKGVRRPQRLHIKPSQVPAVEVIPAGASYNPTFEDHQALLREAHEVELQREKEAEKLERQLALPTSEQAATQESVFREMCEGLLEESDGEDEHEAGRAGQPEAGDGTTEISPTGAAGPEKRMEKKTEQQRRREKAARKLRVQQAALRAARLQHQELFRLRGIKAQVARRLAELARRREQRRIRRLAEADKPRRLGRLKYQAPDIDVQLSSELSGSLRTLKPEGHILRDRFKSFQKRNMIEPRERAKFKRKYKVKLVEKRAYREIQL</sequence>
<protein>
    <recommendedName>
        <fullName evidence="5">Ribosome biogenesis protein NOP53</fullName>
    </recommendedName>
    <alternativeName>
        <fullName evidence="7">Glioma tumor suppressor candidate region gene 2 protein</fullName>
    </alternativeName>
    <alternativeName>
        <fullName evidence="6">PreS1-binding protein</fullName>
    </alternativeName>
</protein>
<proteinExistence type="evidence at protein level"/>
<accession>Q8BK35</accession>
<accession>Q8VD18</accession>
<gene>
    <name evidence="7" type="primary">Nop53</name>
    <name evidence="7" type="synonym">Gltscr2</name>
    <name evidence="4" type="synonym">Pict1</name>
</gene>
<dbReference type="EMBL" id="AY535001">
    <property type="protein sequence ID" value="AAS46029.1"/>
    <property type="molecule type" value="mRNA"/>
</dbReference>
<dbReference type="EMBL" id="AK077341">
    <property type="protein sequence ID" value="BAC36760.1"/>
    <property type="molecule type" value="mRNA"/>
</dbReference>
<dbReference type="EMBL" id="AK146916">
    <property type="protein sequence ID" value="BAE27528.1"/>
    <property type="molecule type" value="mRNA"/>
</dbReference>
<dbReference type="EMBL" id="AK151836">
    <property type="protein sequence ID" value="BAE30729.1"/>
    <property type="molecule type" value="mRNA"/>
</dbReference>
<dbReference type="EMBL" id="AK160070">
    <property type="protein sequence ID" value="BAE35605.1"/>
    <property type="molecule type" value="mRNA"/>
</dbReference>
<dbReference type="EMBL" id="AK169290">
    <property type="protein sequence ID" value="BAE41047.1"/>
    <property type="molecule type" value="mRNA"/>
</dbReference>
<dbReference type="EMBL" id="AC148990">
    <property type="status" value="NOT_ANNOTATED_CDS"/>
    <property type="molecule type" value="Genomic_DNA"/>
</dbReference>
<dbReference type="EMBL" id="CH466654">
    <property type="protein sequence ID" value="EDL42118.1"/>
    <property type="molecule type" value="Genomic_DNA"/>
</dbReference>
<dbReference type="EMBL" id="BC017637">
    <property type="protein sequence ID" value="AAH17637.1"/>
    <property type="molecule type" value="mRNA"/>
</dbReference>
<dbReference type="CCDS" id="CCDS39779.1"/>
<dbReference type="RefSeq" id="NP_598592.2">
    <property type="nucleotide sequence ID" value="NM_133831.3"/>
</dbReference>
<dbReference type="SMR" id="Q8BK35"/>
<dbReference type="FunCoup" id="Q8BK35">
    <property type="interactions" value="3127"/>
</dbReference>
<dbReference type="STRING" id="10090.ENSMUSP00000043981"/>
<dbReference type="iPTMnet" id="Q8BK35"/>
<dbReference type="PhosphoSitePlus" id="Q8BK35"/>
<dbReference type="jPOST" id="Q8BK35"/>
<dbReference type="PaxDb" id="10090-ENSMUSP00000043981"/>
<dbReference type="PeptideAtlas" id="Q8BK35"/>
<dbReference type="ProteomicsDB" id="253095"/>
<dbReference type="Pumba" id="Q8BK35"/>
<dbReference type="Antibodypedia" id="18226">
    <property type="antibodies" value="190 antibodies from 25 providers"/>
</dbReference>
<dbReference type="DNASU" id="68077"/>
<dbReference type="Ensembl" id="ENSMUST00000044158.13">
    <property type="protein sequence ID" value="ENSMUSP00000043981.9"/>
    <property type="gene ID" value="ENSMUSG00000041560.13"/>
</dbReference>
<dbReference type="GeneID" id="68077"/>
<dbReference type="KEGG" id="mmu:68077"/>
<dbReference type="UCSC" id="uc009fgr.2">
    <property type="organism name" value="mouse"/>
</dbReference>
<dbReference type="AGR" id="MGI:2154441"/>
<dbReference type="CTD" id="29997"/>
<dbReference type="MGI" id="MGI:2154441">
    <property type="gene designation" value="Nop53"/>
</dbReference>
<dbReference type="VEuPathDB" id="HostDB:ENSMUSG00000041560"/>
<dbReference type="eggNOG" id="KOG2823">
    <property type="taxonomic scope" value="Eukaryota"/>
</dbReference>
<dbReference type="GeneTree" id="ENSGT00390000017267"/>
<dbReference type="HOGENOM" id="CLU_035888_0_0_1"/>
<dbReference type="InParanoid" id="Q8BK35"/>
<dbReference type="OMA" id="TEKWTHK"/>
<dbReference type="OrthoDB" id="5072at2759"/>
<dbReference type="PhylomeDB" id="Q8BK35"/>
<dbReference type="TreeFam" id="TF313004"/>
<dbReference type="BioGRID-ORCS" id="68077">
    <property type="hits" value="19 hits in 75 CRISPR screens"/>
</dbReference>
<dbReference type="PRO" id="PR:Q8BK35"/>
<dbReference type="Proteomes" id="UP000000589">
    <property type="component" value="Chromosome 7"/>
</dbReference>
<dbReference type="RNAct" id="Q8BK35">
    <property type="molecule type" value="protein"/>
</dbReference>
<dbReference type="Bgee" id="ENSMUSG00000041560">
    <property type="expression patterns" value="Expressed in embryonic brain and 249 other cell types or tissues"/>
</dbReference>
<dbReference type="GO" id="GO:0005829">
    <property type="term" value="C:cytosol"/>
    <property type="evidence" value="ECO:0000250"/>
    <property type="project" value="UniProtKB"/>
</dbReference>
<dbReference type="GO" id="GO:0001650">
    <property type="term" value="C:fibrillar center"/>
    <property type="evidence" value="ECO:0000250"/>
    <property type="project" value="UniProtKB"/>
</dbReference>
<dbReference type="GO" id="GO:0005730">
    <property type="term" value="C:nucleolus"/>
    <property type="evidence" value="ECO:0000314"/>
    <property type="project" value="UniProtKB"/>
</dbReference>
<dbReference type="GO" id="GO:0005654">
    <property type="term" value="C:nucleoplasm"/>
    <property type="evidence" value="ECO:0000250"/>
    <property type="project" value="UniProtKB"/>
</dbReference>
<dbReference type="GO" id="GO:0033553">
    <property type="term" value="C:rDNA heterochromatin"/>
    <property type="evidence" value="ECO:0007669"/>
    <property type="project" value="Ensembl"/>
</dbReference>
<dbReference type="GO" id="GO:0008097">
    <property type="term" value="F:5S rRNA binding"/>
    <property type="evidence" value="ECO:0007669"/>
    <property type="project" value="Ensembl"/>
</dbReference>
<dbReference type="GO" id="GO:0042802">
    <property type="term" value="F:identical protein binding"/>
    <property type="evidence" value="ECO:0000250"/>
    <property type="project" value="UniProtKB"/>
</dbReference>
<dbReference type="GO" id="GO:0002039">
    <property type="term" value="F:p53 binding"/>
    <property type="evidence" value="ECO:0007669"/>
    <property type="project" value="Ensembl"/>
</dbReference>
<dbReference type="GO" id="GO:0071456">
    <property type="term" value="P:cellular response to hypoxia"/>
    <property type="evidence" value="ECO:0007669"/>
    <property type="project" value="Ensembl"/>
</dbReference>
<dbReference type="GO" id="GO:0006281">
    <property type="term" value="P:DNA repair"/>
    <property type="evidence" value="ECO:0000250"/>
    <property type="project" value="UniProtKB"/>
</dbReference>
<dbReference type="GO" id="GO:0007095">
    <property type="term" value="P:mitotic G2 DNA damage checkpoint signaling"/>
    <property type="evidence" value="ECO:0000250"/>
    <property type="project" value="UniProtKB"/>
</dbReference>
<dbReference type="GO" id="GO:0051898">
    <property type="term" value="P:negative regulation of phosphatidylinositol 3-kinase/protein kinase B signal transduction"/>
    <property type="evidence" value="ECO:0000250"/>
    <property type="project" value="UniProtKB"/>
</dbReference>
<dbReference type="GO" id="GO:0032435">
    <property type="term" value="P:negative regulation of proteasomal ubiquitin-dependent protein catabolic process"/>
    <property type="evidence" value="ECO:0000250"/>
    <property type="project" value="UniProtKB"/>
</dbReference>
<dbReference type="GO" id="GO:0031333">
    <property type="term" value="P:negative regulation of protein-containing complex assembly"/>
    <property type="evidence" value="ECO:0000250"/>
    <property type="project" value="UniProtKB"/>
</dbReference>
<dbReference type="GO" id="GO:1901797">
    <property type="term" value="P:negative regulation of signal transduction by p53 class mediator"/>
    <property type="evidence" value="ECO:0000315"/>
    <property type="project" value="UniProtKB"/>
</dbReference>
<dbReference type="GO" id="GO:0000122">
    <property type="term" value="P:negative regulation of transcription by RNA polymerase II"/>
    <property type="evidence" value="ECO:0000250"/>
    <property type="project" value="UniProtKB"/>
</dbReference>
<dbReference type="GO" id="GO:1901837">
    <property type="term" value="P:negative regulation of transcription of nucleolar large rRNA by RNA polymerase I"/>
    <property type="evidence" value="ECO:0000250"/>
    <property type="project" value="UniProtKB"/>
</dbReference>
<dbReference type="GO" id="GO:0032436">
    <property type="term" value="P:positive regulation of proteasomal ubiquitin-dependent protein catabolic process"/>
    <property type="evidence" value="ECO:0000315"/>
    <property type="project" value="UniProtKB"/>
</dbReference>
<dbReference type="GO" id="GO:1903006">
    <property type="term" value="P:positive regulation of protein K63-linked deubiquitination"/>
    <property type="evidence" value="ECO:0000250"/>
    <property type="project" value="UniProtKB"/>
</dbReference>
<dbReference type="GO" id="GO:1902570">
    <property type="term" value="P:protein localization to nucleolus"/>
    <property type="evidence" value="ECO:0000315"/>
    <property type="project" value="UniProtKB"/>
</dbReference>
<dbReference type="GO" id="GO:1990173">
    <property type="term" value="P:protein localization to nucleoplasm"/>
    <property type="evidence" value="ECO:0000250"/>
    <property type="project" value="UniProtKB"/>
</dbReference>
<dbReference type="GO" id="GO:0050821">
    <property type="term" value="P:protein stabilization"/>
    <property type="evidence" value="ECO:0000250"/>
    <property type="project" value="UniProtKB"/>
</dbReference>
<dbReference type="GO" id="GO:1903715">
    <property type="term" value="P:regulation of aerobic respiration"/>
    <property type="evidence" value="ECO:0000250"/>
    <property type="project" value="UniProtKB"/>
</dbReference>
<dbReference type="GO" id="GO:0042981">
    <property type="term" value="P:regulation of apoptotic process"/>
    <property type="evidence" value="ECO:0000250"/>
    <property type="project" value="UniProtKB"/>
</dbReference>
<dbReference type="GO" id="GO:0051726">
    <property type="term" value="P:regulation of cell cycle"/>
    <property type="evidence" value="ECO:0000250"/>
    <property type="project" value="UniProtKB"/>
</dbReference>
<dbReference type="GO" id="GO:0001932">
    <property type="term" value="P:regulation of protein phosphorylation"/>
    <property type="evidence" value="ECO:0000250"/>
    <property type="project" value="UniProtKB"/>
</dbReference>
<dbReference type="GO" id="GO:0039535">
    <property type="term" value="P:regulation of RIG-I signaling pathway"/>
    <property type="evidence" value="ECO:0007669"/>
    <property type="project" value="Ensembl"/>
</dbReference>
<dbReference type="GO" id="GO:0000027">
    <property type="term" value="P:ribosomal large subunit assembly"/>
    <property type="evidence" value="ECO:0000250"/>
    <property type="project" value="UniProtKB"/>
</dbReference>
<dbReference type="InterPro" id="IPR011687">
    <property type="entry name" value="Nop53/GLTSCR2"/>
</dbReference>
<dbReference type="PANTHER" id="PTHR14211">
    <property type="entry name" value="GLIOMA SUPPRESSOR CANDIDATE REGION GENE 2"/>
    <property type="match status" value="1"/>
</dbReference>
<dbReference type="PANTHER" id="PTHR14211:SF7">
    <property type="entry name" value="RIBOSOME BIOGENESIS PROTEIN NOP53"/>
    <property type="match status" value="1"/>
</dbReference>
<dbReference type="Pfam" id="PF07767">
    <property type="entry name" value="Nop53"/>
    <property type="match status" value="1"/>
</dbReference>
<dbReference type="PIRSF" id="PIRSF017302">
    <property type="entry name" value="Gltscr2"/>
    <property type="match status" value="1"/>
</dbReference>
<evidence type="ECO:0000250" key="1">
    <source>
        <dbReference type="UniProtKB" id="Q9NZM5"/>
    </source>
</evidence>
<evidence type="ECO:0000256" key="2">
    <source>
        <dbReference type="SAM" id="MobiDB-lite"/>
    </source>
</evidence>
<evidence type="ECO:0000269" key="3">
    <source>
    </source>
</evidence>
<evidence type="ECO:0000303" key="4">
    <source>
    </source>
</evidence>
<evidence type="ECO:0000305" key="5"/>
<evidence type="ECO:0000312" key="6">
    <source>
        <dbReference type="EMBL" id="AAS46029.1"/>
    </source>
</evidence>
<evidence type="ECO:0000312" key="7">
    <source>
        <dbReference type="MGI" id="MGI:2154441"/>
    </source>
</evidence>
<evidence type="ECO:0007744" key="8">
    <source>
    </source>
</evidence>
<evidence type="ECO:0007744" key="9">
    <source>
    </source>
</evidence>
<keyword id="KW-0007">Acetylation</keyword>
<keyword id="KW-0539">Nucleus</keyword>
<keyword id="KW-0597">Phosphoprotein</keyword>
<keyword id="KW-1185">Reference proteome</keyword>
<keyword id="KW-0690">Ribosome biogenesis</keyword>
<organism>
    <name type="scientific">Mus musculus</name>
    <name type="common">Mouse</name>
    <dbReference type="NCBI Taxonomy" id="10090"/>
    <lineage>
        <taxon>Eukaryota</taxon>
        <taxon>Metazoa</taxon>
        <taxon>Chordata</taxon>
        <taxon>Craniata</taxon>
        <taxon>Vertebrata</taxon>
        <taxon>Euteleostomi</taxon>
        <taxon>Mammalia</taxon>
        <taxon>Eutheria</taxon>
        <taxon>Euarchontoglires</taxon>
        <taxon>Glires</taxon>
        <taxon>Rodentia</taxon>
        <taxon>Myomorpha</taxon>
        <taxon>Muroidea</taxon>
        <taxon>Muridae</taxon>
        <taxon>Murinae</taxon>
        <taxon>Mus</taxon>
        <taxon>Mus</taxon>
    </lineage>
</organism>
<reference key="1">
    <citation type="submission" date="2004-01" db="EMBL/GenBank/DDBJ databases">
        <title>Cloning of murine gene of hepatitis B virus PreS1 binding protein.</title>
        <authorList>
            <person name="Cheng J."/>
            <person name="Dong J."/>
            <person name="Liu Y."/>
        </authorList>
    </citation>
    <scope>NUCLEOTIDE SEQUENCE [MRNA]</scope>
</reference>
<reference key="2">
    <citation type="journal article" date="2005" name="Science">
        <title>The transcriptional landscape of the mammalian genome.</title>
        <authorList>
            <person name="Carninci P."/>
            <person name="Kasukawa T."/>
            <person name="Katayama S."/>
            <person name="Gough J."/>
            <person name="Frith M.C."/>
            <person name="Maeda N."/>
            <person name="Oyama R."/>
            <person name="Ravasi T."/>
            <person name="Lenhard B."/>
            <person name="Wells C."/>
            <person name="Kodzius R."/>
            <person name="Shimokawa K."/>
            <person name="Bajic V.B."/>
            <person name="Brenner S.E."/>
            <person name="Batalov S."/>
            <person name="Forrest A.R."/>
            <person name="Zavolan M."/>
            <person name="Davis M.J."/>
            <person name="Wilming L.G."/>
            <person name="Aidinis V."/>
            <person name="Allen J.E."/>
            <person name="Ambesi-Impiombato A."/>
            <person name="Apweiler R."/>
            <person name="Aturaliya R.N."/>
            <person name="Bailey T.L."/>
            <person name="Bansal M."/>
            <person name="Baxter L."/>
            <person name="Beisel K.W."/>
            <person name="Bersano T."/>
            <person name="Bono H."/>
            <person name="Chalk A.M."/>
            <person name="Chiu K.P."/>
            <person name="Choudhary V."/>
            <person name="Christoffels A."/>
            <person name="Clutterbuck D.R."/>
            <person name="Crowe M.L."/>
            <person name="Dalla E."/>
            <person name="Dalrymple B.P."/>
            <person name="de Bono B."/>
            <person name="Della Gatta G."/>
            <person name="di Bernardo D."/>
            <person name="Down T."/>
            <person name="Engstrom P."/>
            <person name="Fagiolini M."/>
            <person name="Faulkner G."/>
            <person name="Fletcher C.F."/>
            <person name="Fukushima T."/>
            <person name="Furuno M."/>
            <person name="Futaki S."/>
            <person name="Gariboldi M."/>
            <person name="Georgii-Hemming P."/>
            <person name="Gingeras T.R."/>
            <person name="Gojobori T."/>
            <person name="Green R.E."/>
            <person name="Gustincich S."/>
            <person name="Harbers M."/>
            <person name="Hayashi Y."/>
            <person name="Hensch T.K."/>
            <person name="Hirokawa N."/>
            <person name="Hill D."/>
            <person name="Huminiecki L."/>
            <person name="Iacono M."/>
            <person name="Ikeo K."/>
            <person name="Iwama A."/>
            <person name="Ishikawa T."/>
            <person name="Jakt M."/>
            <person name="Kanapin A."/>
            <person name="Katoh M."/>
            <person name="Kawasawa Y."/>
            <person name="Kelso J."/>
            <person name="Kitamura H."/>
            <person name="Kitano H."/>
            <person name="Kollias G."/>
            <person name="Krishnan S.P."/>
            <person name="Kruger A."/>
            <person name="Kummerfeld S.K."/>
            <person name="Kurochkin I.V."/>
            <person name="Lareau L.F."/>
            <person name="Lazarevic D."/>
            <person name="Lipovich L."/>
            <person name="Liu J."/>
            <person name="Liuni S."/>
            <person name="McWilliam S."/>
            <person name="Madan Babu M."/>
            <person name="Madera M."/>
            <person name="Marchionni L."/>
            <person name="Matsuda H."/>
            <person name="Matsuzawa S."/>
            <person name="Miki H."/>
            <person name="Mignone F."/>
            <person name="Miyake S."/>
            <person name="Morris K."/>
            <person name="Mottagui-Tabar S."/>
            <person name="Mulder N."/>
            <person name="Nakano N."/>
            <person name="Nakauchi H."/>
            <person name="Ng P."/>
            <person name="Nilsson R."/>
            <person name="Nishiguchi S."/>
            <person name="Nishikawa S."/>
            <person name="Nori F."/>
            <person name="Ohara O."/>
            <person name="Okazaki Y."/>
            <person name="Orlando V."/>
            <person name="Pang K.C."/>
            <person name="Pavan W.J."/>
            <person name="Pavesi G."/>
            <person name="Pesole G."/>
            <person name="Petrovsky N."/>
            <person name="Piazza S."/>
            <person name="Reed J."/>
            <person name="Reid J.F."/>
            <person name="Ring B.Z."/>
            <person name="Ringwald M."/>
            <person name="Rost B."/>
            <person name="Ruan Y."/>
            <person name="Salzberg S.L."/>
            <person name="Sandelin A."/>
            <person name="Schneider C."/>
            <person name="Schoenbach C."/>
            <person name="Sekiguchi K."/>
            <person name="Semple C.A."/>
            <person name="Seno S."/>
            <person name="Sessa L."/>
            <person name="Sheng Y."/>
            <person name="Shibata Y."/>
            <person name="Shimada H."/>
            <person name="Shimada K."/>
            <person name="Silva D."/>
            <person name="Sinclair B."/>
            <person name="Sperling S."/>
            <person name="Stupka E."/>
            <person name="Sugiura K."/>
            <person name="Sultana R."/>
            <person name="Takenaka Y."/>
            <person name="Taki K."/>
            <person name="Tammoja K."/>
            <person name="Tan S.L."/>
            <person name="Tang S."/>
            <person name="Taylor M.S."/>
            <person name="Tegner J."/>
            <person name="Teichmann S.A."/>
            <person name="Ueda H.R."/>
            <person name="van Nimwegen E."/>
            <person name="Verardo R."/>
            <person name="Wei C.L."/>
            <person name="Yagi K."/>
            <person name="Yamanishi H."/>
            <person name="Zabarovsky E."/>
            <person name="Zhu S."/>
            <person name="Zimmer A."/>
            <person name="Hide W."/>
            <person name="Bult C."/>
            <person name="Grimmond S.M."/>
            <person name="Teasdale R.D."/>
            <person name="Liu E.T."/>
            <person name="Brusic V."/>
            <person name="Quackenbush J."/>
            <person name="Wahlestedt C."/>
            <person name="Mattick J.S."/>
            <person name="Hume D.A."/>
            <person name="Kai C."/>
            <person name="Sasaki D."/>
            <person name="Tomaru Y."/>
            <person name="Fukuda S."/>
            <person name="Kanamori-Katayama M."/>
            <person name="Suzuki M."/>
            <person name="Aoki J."/>
            <person name="Arakawa T."/>
            <person name="Iida J."/>
            <person name="Imamura K."/>
            <person name="Itoh M."/>
            <person name="Kato T."/>
            <person name="Kawaji H."/>
            <person name="Kawagashira N."/>
            <person name="Kawashima T."/>
            <person name="Kojima M."/>
            <person name="Kondo S."/>
            <person name="Konno H."/>
            <person name="Nakano K."/>
            <person name="Ninomiya N."/>
            <person name="Nishio T."/>
            <person name="Okada M."/>
            <person name="Plessy C."/>
            <person name="Shibata K."/>
            <person name="Shiraki T."/>
            <person name="Suzuki S."/>
            <person name="Tagami M."/>
            <person name="Waki K."/>
            <person name="Watahiki A."/>
            <person name="Okamura-Oho Y."/>
            <person name="Suzuki H."/>
            <person name="Kawai J."/>
            <person name="Hayashizaki Y."/>
        </authorList>
    </citation>
    <scope>NUCLEOTIDE SEQUENCE [LARGE SCALE MRNA]</scope>
    <source>
        <strain>C57BL/6J</strain>
        <tissue>Bone marrow</tissue>
        <tissue>Heart</tissue>
        <tissue>Kidney</tissue>
        <tissue>Pituitary</tissue>
    </source>
</reference>
<reference key="3">
    <citation type="journal article" date="2009" name="PLoS Biol.">
        <title>Lineage-specific biology revealed by a finished genome assembly of the mouse.</title>
        <authorList>
            <person name="Church D.M."/>
            <person name="Goodstadt L."/>
            <person name="Hillier L.W."/>
            <person name="Zody M.C."/>
            <person name="Goldstein S."/>
            <person name="She X."/>
            <person name="Bult C.J."/>
            <person name="Agarwala R."/>
            <person name="Cherry J.L."/>
            <person name="DiCuccio M."/>
            <person name="Hlavina W."/>
            <person name="Kapustin Y."/>
            <person name="Meric P."/>
            <person name="Maglott D."/>
            <person name="Birtle Z."/>
            <person name="Marques A.C."/>
            <person name="Graves T."/>
            <person name="Zhou S."/>
            <person name="Teague B."/>
            <person name="Potamousis K."/>
            <person name="Churas C."/>
            <person name="Place M."/>
            <person name="Herschleb J."/>
            <person name="Runnheim R."/>
            <person name="Forrest D."/>
            <person name="Amos-Landgraf J."/>
            <person name="Schwartz D.C."/>
            <person name="Cheng Z."/>
            <person name="Lindblad-Toh K."/>
            <person name="Eichler E.E."/>
            <person name="Ponting C.P."/>
        </authorList>
    </citation>
    <scope>NUCLEOTIDE SEQUENCE [LARGE SCALE GENOMIC DNA]</scope>
    <source>
        <strain>C57BL/6J</strain>
    </source>
</reference>
<reference key="4">
    <citation type="submission" date="2005-09" db="EMBL/GenBank/DDBJ databases">
        <authorList>
            <person name="Mural R.J."/>
            <person name="Adams M.D."/>
            <person name="Myers E.W."/>
            <person name="Smith H.O."/>
            <person name="Venter J.C."/>
        </authorList>
    </citation>
    <scope>NUCLEOTIDE SEQUENCE [LARGE SCALE GENOMIC DNA]</scope>
</reference>
<reference key="5">
    <citation type="journal article" date="2004" name="Genome Res.">
        <title>The status, quality, and expansion of the NIH full-length cDNA project: the Mammalian Gene Collection (MGC).</title>
        <authorList>
            <consortium name="The MGC Project Team"/>
        </authorList>
    </citation>
    <scope>NUCLEOTIDE SEQUENCE [LARGE SCALE MRNA]</scope>
    <source>
        <strain>FVB/N</strain>
        <tissue>Salivary gland</tissue>
    </source>
</reference>
<reference key="6">
    <citation type="journal article" date="2007" name="Proc. Natl. Acad. Sci. U.S.A.">
        <title>Large-scale phosphorylation analysis of mouse liver.</title>
        <authorList>
            <person name="Villen J."/>
            <person name="Beausoleil S.A."/>
            <person name="Gerber S.A."/>
            <person name="Gygi S.P."/>
        </authorList>
    </citation>
    <scope>PHOSPHORYLATION [LARGE SCALE ANALYSIS] AT SER-305</scope>
    <scope>IDENTIFICATION BY MASS SPECTROMETRY [LARGE SCALE ANALYSIS]</scope>
    <source>
        <tissue>Liver</tissue>
    </source>
</reference>
<reference key="7">
    <citation type="journal article" date="2010" name="Cell">
        <title>A tissue-specific atlas of mouse protein phosphorylation and expression.</title>
        <authorList>
            <person name="Huttlin E.L."/>
            <person name="Jedrychowski M.P."/>
            <person name="Elias J.E."/>
            <person name="Goswami T."/>
            <person name="Rad R."/>
            <person name="Beausoleil S.A."/>
            <person name="Villen J."/>
            <person name="Haas W."/>
            <person name="Sowa M.E."/>
            <person name="Gygi S.P."/>
        </authorList>
    </citation>
    <scope>PHOSPHORYLATION [LARGE SCALE ANALYSIS] AT SER-305</scope>
    <scope>IDENTIFICATION BY MASS SPECTROMETRY [LARGE SCALE ANALYSIS]</scope>
    <source>
        <tissue>Kidney</tissue>
        <tissue>Spleen</tissue>
    </source>
</reference>
<reference key="8">
    <citation type="journal article" date="2011" name="Nat. Med.">
        <title>Regulation of the MDM2-P53 pathway and tumor growth by PICT1 via nucleolar RPL11.</title>
        <authorList>
            <person name="Sasaki M."/>
            <person name="Kawahara K."/>
            <person name="Nishio M."/>
            <person name="Mimori K."/>
            <person name="Kogo R."/>
            <person name="Hamada K."/>
            <person name="Itoh B."/>
            <person name="Wang J."/>
            <person name="Komatsu Y."/>
            <person name="Yang Y.R."/>
            <person name="Hikasa H."/>
            <person name="Horie Y."/>
            <person name="Yamashita T."/>
            <person name="Kamijo T."/>
            <person name="Zhang Y."/>
            <person name="Zhu Y."/>
            <person name="Prives C."/>
            <person name="Nakano T."/>
            <person name="Mak T.W."/>
            <person name="Sasaki T."/>
            <person name="Maehama T."/>
            <person name="Mori M."/>
            <person name="Suzuki A."/>
        </authorList>
    </citation>
    <scope>FUNCTION</scope>
    <scope>INTERACTION WITH RPL11</scope>
    <scope>SUBCELLULAR LOCATION</scope>
    <scope>DISRUPTION PHENOTYPE</scope>
</reference>
<name>NOP53_MOUSE</name>
<comment type="function">
    <text evidence="1 3">Nucleolar protein which is involved in the integration of the 5S RNP into the ribosomal large subunit during ribosome biogenesis. In ribosome biogenesis, may also play a role in rRNA transcription (By similarity). Also functions as a nucleolar sensor that regulates the activation of p53/TP53 in response to ribosome biogenesis perturbation, DNA damage and other stress conditions. DNA damage or perturbation of ribosome biogenesis disrupt the interaction between NOP53 and RPL11 allowing RPL11 transport to the nucleoplasm where it can inhibit MDM2 and allow p53/TP53 activation (PubMed:21804542). It may also positively regulate the function of p53/TP53 in cell cycle arrest and apoptosis through direct interaction, preventing its MDM2-dependent ubiquitin-mediated proteasomal degradation. Originally identified as a tumor suppressor, it may also play a role in cell proliferation and apoptosis by positively regulating the stability of PTEN, thereby antagonizing the PI3K-AKT/PKB signaling pathway. May also inhibit cell proliferation and increase apoptosis through its interaction with NF2. May negatively regulate NPM1 by regulating its nucleoplasmic localization, oligomerization and ubiquitin-mediated proteasomal degradation. Thereby, may prevent NPM1 interaction with MYC and negatively regulate transcription mediated by the MYC-NPM1 complex. May also regulate cellular aerobic respiration. In the cellular response to viral infection, may play a role in the attenuation of interferon-beta through the inhibition of RIGI (By similarity).</text>
</comment>
<comment type="subunit">
    <text evidence="1 3">Homooligomer. Interacts with PTEN; regulates PTEN phosphorylation and increases its stability (By similarity). Interacts with RPL11; retains RPL11 into the nucleolus (PubMed:21804542). Interacts with CDKN2A/isoform tumor suppressor ARF; the interaction is direct and promotes ARF nucleoplasmic relocalization and ubiquitin-mediated proteasomal degradation. Interacts with NPM1; the interaction is direct and competitive with MYC. Interacts with NF2 (via FERM domain); the interaction is direct. Interacts with p53/TP53 (via the oligomerization region); the interaction is direct and may prevent the MDM2-mediated proteasomal degradation of p53/TP53. Interacts with RIGI; may regulate RIGI through USP15-mediated 'Lys-63'-linked deubiquitination. Interacts with UBTF (By similarity).</text>
</comment>
<comment type="subcellular location">
    <subcellularLocation>
        <location evidence="3">Nucleus</location>
        <location evidence="3">Nucleolus</location>
    </subcellularLocation>
    <subcellularLocation>
        <location evidence="1">Nucleus</location>
        <location evidence="1">Nucleoplasm</location>
    </subcellularLocation>
    <text evidence="1">In the nucleolus may be more specifically localized to the fibrillar center. Mainly nucleolar it relocalizes to the nucleoplasm under specific conditions including ribosomal stress enabling it to interact and regulate nucleoplasmic proteins like p53/TP53. Also detected in the cytosol.</text>
</comment>
<comment type="PTM">
    <text evidence="1">Ubiquitin-mediated proteasomal degradation is regulated by c-JUN. It is associated with relocalization to the nucleoplasm and decreased homooligomerization.</text>
</comment>
<comment type="PTM">
    <text evidence="1">Phosphorylated upon DNA damage probably by ATM and DNA-PK; may regulate NOP53 degradation.</text>
</comment>
<comment type="disruption phenotype">
    <text evidence="3">Knockout embryos are not able to form viable blastocysts. Transgenic mice lacking the expression of Nop53 in the thymus display a dramatic reduction of the number of thymic cells and of the size of the thymus.</text>
</comment>
<comment type="similarity">
    <text evidence="5">Belongs to the NOP53 family.</text>
</comment>